<protein>
    <recommendedName>
        <fullName evidence="4">Dolichyl-phosphate beta-glucosyltransferase</fullName>
        <shortName evidence="4">DolP-glucosyltransferase</shortName>
        <ecNumber evidence="3">2.4.1.117</ecNumber>
    </recommendedName>
    <alternativeName>
        <fullName evidence="4">Asparagine-linked glycosylation protein 5</fullName>
    </alternativeName>
</protein>
<name>ALG5_YEAST</name>
<organism>
    <name type="scientific">Saccharomyces cerevisiae (strain ATCC 204508 / S288c)</name>
    <name type="common">Baker's yeast</name>
    <dbReference type="NCBI Taxonomy" id="559292"/>
    <lineage>
        <taxon>Eukaryota</taxon>
        <taxon>Fungi</taxon>
        <taxon>Dikarya</taxon>
        <taxon>Ascomycota</taxon>
        <taxon>Saccharomycotina</taxon>
        <taxon>Saccharomycetes</taxon>
        <taxon>Saccharomycetales</taxon>
        <taxon>Saccharomycetaceae</taxon>
        <taxon>Saccharomyces</taxon>
    </lineage>
</organism>
<sequence length="334" mass="38347">MRALRFLIENRNTVFFTLLVALVLSLYLLVYLFSHTPRPPYPEELKYIAIDEKGHEVSRALPNLNEHQDDEEIFLSVVIPSYNETGRILLMLTDAISFLKEKYGSRWEIVIVDDGSTDNTTQYCLKICKEQFKLNYEQFRIIKFSQNRGKGGAVRQGFLHIRGKYGLFADADGASKFSDVEKLIDAISKIETSSTDLKTTKPAVAIGSRAHMVNTEAVIKRSMIRNCLMYGFHTLVFIFGIRSIKDTQCGFKLFNRAAILKIFPYLHTEGWIFDVEILILAIRKRIQIEEIPISWHEVDGSKMALAIDSIKMAKDLVIIRMAYLLGIYRDNKKC</sequence>
<accession>P40350</accession>
<accession>D6W3E3</accession>
<evidence type="ECO:0000255" key="1"/>
<evidence type="ECO:0000269" key="2">
    <source>
    </source>
</evidence>
<evidence type="ECO:0000269" key="3">
    <source>
    </source>
</evidence>
<evidence type="ECO:0000303" key="4">
    <source>
    </source>
</evidence>
<evidence type="ECO:0000305" key="5"/>
<evidence type="ECO:0000305" key="6">
    <source>
    </source>
</evidence>
<keyword id="KW-0256">Endoplasmic reticulum</keyword>
<keyword id="KW-0328">Glycosyltransferase</keyword>
<keyword id="KW-0472">Membrane</keyword>
<keyword id="KW-1185">Reference proteome</keyword>
<keyword id="KW-0735">Signal-anchor</keyword>
<keyword id="KW-0808">Transferase</keyword>
<keyword id="KW-0812">Transmembrane</keyword>
<keyword id="KW-1133">Transmembrane helix</keyword>
<gene>
    <name evidence="4" type="primary">ALG5</name>
    <name type="ordered locus">YPL227C</name>
    <name type="ORF">P1437</name>
</gene>
<comment type="function">
    <text evidence="3">Endoplasmic reticulum membrane-bound UDP-glucose:dolichyl-phosphate glucosyltransferase involved in protein N-linked glycosylation.</text>
</comment>
<comment type="catalytic activity">
    <reaction evidence="3">
        <text>a di-trans,poly-cis-dolichyl phosphate + UDP-alpha-D-glucose = a di-trans,poly-cis-dolichyl beta-D-glucosyl phosphate + UDP</text>
        <dbReference type="Rhea" id="RHEA:15401"/>
        <dbReference type="Rhea" id="RHEA-COMP:19498"/>
        <dbReference type="Rhea" id="RHEA-COMP:19502"/>
        <dbReference type="ChEBI" id="CHEBI:57525"/>
        <dbReference type="ChEBI" id="CHEBI:57683"/>
        <dbReference type="ChEBI" id="CHEBI:58223"/>
        <dbReference type="ChEBI" id="CHEBI:58885"/>
        <dbReference type="EC" id="2.4.1.117"/>
    </reaction>
    <physiologicalReaction direction="left-to-right" evidence="6">
        <dbReference type="Rhea" id="RHEA:15402"/>
    </physiologicalReaction>
</comment>
<comment type="pathway">
    <text evidence="3">Protein modification; protein glycosylation.</text>
</comment>
<comment type="subcellular location">
    <subcellularLocation>
        <location evidence="3">Endoplasmic reticulum membrane</location>
        <topology evidence="1">Single-pass membrane protein</topology>
    </subcellularLocation>
    <text evidence="3">Its interaction with the substrate UDP-glucose may occur at the cytoplasmic side of the ER, whereas the steps utilizing dolichyl beta-D-glucosyl phosphate take place in the lumen of the ER.</text>
</comment>
<comment type="disruption phenotype">
    <text evidence="3">Leads to a loss of UDP-glucose:dolichyl-phosphate glucosyltransferase activity and a concomitant underglycosylation of carboxypeptidase Y.</text>
</comment>
<comment type="miscellaneous">
    <text evidence="2">Present with 5800 molecules/cell in log phase SD medium.</text>
</comment>
<comment type="similarity">
    <text evidence="5">Belongs to the glycosyltransferase 2 family.</text>
</comment>
<dbReference type="EC" id="2.4.1.117" evidence="3"/>
<dbReference type="EMBL" id="X77573">
    <property type="protein sequence ID" value="CAA54680.1"/>
    <property type="molecule type" value="Genomic_DNA"/>
</dbReference>
<dbReference type="EMBL" id="X94561">
    <property type="protein sequence ID" value="CAA64260.1"/>
    <property type="molecule type" value="Genomic_DNA"/>
</dbReference>
<dbReference type="EMBL" id="Z73583">
    <property type="protein sequence ID" value="CAA97942.1"/>
    <property type="molecule type" value="Genomic_DNA"/>
</dbReference>
<dbReference type="EMBL" id="BK006949">
    <property type="protein sequence ID" value="DAA11209.1"/>
    <property type="molecule type" value="Genomic_DNA"/>
</dbReference>
<dbReference type="PIR" id="S48136">
    <property type="entry name" value="S48136"/>
</dbReference>
<dbReference type="RefSeq" id="NP_015097.1">
    <property type="nucleotide sequence ID" value="NM_001184041.1"/>
</dbReference>
<dbReference type="SMR" id="P40350"/>
<dbReference type="BioGRID" id="35958">
    <property type="interactions" value="258"/>
</dbReference>
<dbReference type="DIP" id="DIP-5651N"/>
<dbReference type="FunCoup" id="P40350">
    <property type="interactions" value="773"/>
</dbReference>
<dbReference type="IntAct" id="P40350">
    <property type="interactions" value="26"/>
</dbReference>
<dbReference type="MINT" id="P40350"/>
<dbReference type="STRING" id="4932.YPL227C"/>
<dbReference type="CAZy" id="GT2">
    <property type="family name" value="Glycosyltransferase Family 2"/>
</dbReference>
<dbReference type="GlyCosmos" id="P40350">
    <property type="glycosylation" value="2 sites, No reported glycans"/>
</dbReference>
<dbReference type="iPTMnet" id="P40350"/>
<dbReference type="PaxDb" id="4932-YPL227C"/>
<dbReference type="PeptideAtlas" id="P40350"/>
<dbReference type="EnsemblFungi" id="YPL227C_mRNA">
    <property type="protein sequence ID" value="YPL227C"/>
    <property type="gene ID" value="YPL227C"/>
</dbReference>
<dbReference type="GeneID" id="855874"/>
<dbReference type="KEGG" id="sce:YPL227C"/>
<dbReference type="AGR" id="SGD:S000006148"/>
<dbReference type="SGD" id="S000006148">
    <property type="gene designation" value="ALG5"/>
</dbReference>
<dbReference type="VEuPathDB" id="FungiDB:YPL227C"/>
<dbReference type="eggNOG" id="KOG2977">
    <property type="taxonomic scope" value="Eukaryota"/>
</dbReference>
<dbReference type="GeneTree" id="ENSGT00940000153481"/>
<dbReference type="HOGENOM" id="CLU_033536_9_1_1"/>
<dbReference type="InParanoid" id="P40350"/>
<dbReference type="OMA" id="HMVNTDA"/>
<dbReference type="OrthoDB" id="3784at2759"/>
<dbReference type="BioCyc" id="MetaCyc:YPL227C-MONOMER"/>
<dbReference type="BioCyc" id="YEAST:YPL227C-MONOMER"/>
<dbReference type="Reactome" id="R-SCE-480985">
    <property type="pathway name" value="Synthesis of dolichyl-phosphate-glucose"/>
</dbReference>
<dbReference type="UniPathway" id="UPA00378"/>
<dbReference type="BioGRID-ORCS" id="855874">
    <property type="hits" value="0 hits in 10 CRISPR screens"/>
</dbReference>
<dbReference type="PRO" id="PR:P40350"/>
<dbReference type="Proteomes" id="UP000002311">
    <property type="component" value="Chromosome XVI"/>
</dbReference>
<dbReference type="RNAct" id="P40350">
    <property type="molecule type" value="protein"/>
</dbReference>
<dbReference type="GO" id="GO:0005789">
    <property type="term" value="C:endoplasmic reticulum membrane"/>
    <property type="evidence" value="ECO:0000314"/>
    <property type="project" value="SGD"/>
</dbReference>
<dbReference type="GO" id="GO:0004581">
    <property type="term" value="F:dolichyl-phosphate beta-glucosyltransferase activity"/>
    <property type="evidence" value="ECO:0000314"/>
    <property type="project" value="SGD"/>
</dbReference>
<dbReference type="GO" id="GO:0006487">
    <property type="term" value="P:protein N-linked glycosylation"/>
    <property type="evidence" value="ECO:0000315"/>
    <property type="project" value="UniProtKB"/>
</dbReference>
<dbReference type="CDD" id="cd04188">
    <property type="entry name" value="DPG_synthase"/>
    <property type="match status" value="1"/>
</dbReference>
<dbReference type="FunFam" id="3.90.550.10:FF:000169">
    <property type="entry name" value="Dolichyl-phosphate beta-glucosyltransferase"/>
    <property type="match status" value="1"/>
</dbReference>
<dbReference type="Gene3D" id="3.90.550.10">
    <property type="entry name" value="Spore Coat Polysaccharide Biosynthesis Protein SpsA, Chain A"/>
    <property type="match status" value="1"/>
</dbReference>
<dbReference type="InterPro" id="IPR035518">
    <property type="entry name" value="DPG_synthase"/>
</dbReference>
<dbReference type="InterPro" id="IPR001173">
    <property type="entry name" value="Glyco_trans_2-like"/>
</dbReference>
<dbReference type="InterPro" id="IPR029044">
    <property type="entry name" value="Nucleotide-diphossugar_trans"/>
</dbReference>
<dbReference type="PANTHER" id="PTHR10859:SF91">
    <property type="entry name" value="DOLICHYL-PHOSPHATE BETA-GLUCOSYLTRANSFERASE"/>
    <property type="match status" value="1"/>
</dbReference>
<dbReference type="PANTHER" id="PTHR10859">
    <property type="entry name" value="GLYCOSYL TRANSFERASE"/>
    <property type="match status" value="1"/>
</dbReference>
<dbReference type="Pfam" id="PF00535">
    <property type="entry name" value="Glycos_transf_2"/>
    <property type="match status" value="1"/>
</dbReference>
<dbReference type="SUPFAM" id="SSF53448">
    <property type="entry name" value="Nucleotide-diphospho-sugar transferases"/>
    <property type="match status" value="1"/>
</dbReference>
<reference key="1">
    <citation type="journal article" date="1994" name="Eur. J. Biochem.">
        <title>Isolation of the ALG5 locus encoding the UDP-glucose:dolichyl-phosphate glucosyltransferase from Saccharomyces cerevisiae.</title>
        <authorList>
            <person name="Te Heesen S."/>
            <person name="Lehle L."/>
            <person name="Weissmann A."/>
            <person name="Aebi M."/>
        </authorList>
    </citation>
    <scope>NUCLEOTIDE SEQUENCE [GENOMIC DNA]</scope>
    <scope>FUNCTION</scope>
    <scope>CATALYTIC ACTIVITY</scope>
    <scope>DISRUPTION PHENOTYPE</scope>
    <scope>SUBCELLULAR LOCATION</scope>
    <scope>TOPOLOGY</scope>
</reference>
<reference key="2">
    <citation type="journal article" date="1997" name="Nature">
        <title>The nucleotide sequence of Saccharomyces cerevisiae chromosome XVI.</title>
        <authorList>
            <person name="Bussey H."/>
            <person name="Storms R.K."/>
            <person name="Ahmed A."/>
            <person name="Albermann K."/>
            <person name="Allen E."/>
            <person name="Ansorge W."/>
            <person name="Araujo R."/>
            <person name="Aparicio A."/>
            <person name="Barrell B.G."/>
            <person name="Badcock K."/>
            <person name="Benes V."/>
            <person name="Botstein D."/>
            <person name="Bowman S."/>
            <person name="Brueckner M."/>
            <person name="Carpenter J."/>
            <person name="Cherry J.M."/>
            <person name="Chung E."/>
            <person name="Churcher C.M."/>
            <person name="Coster F."/>
            <person name="Davis K."/>
            <person name="Davis R.W."/>
            <person name="Dietrich F.S."/>
            <person name="Delius H."/>
            <person name="DiPaolo T."/>
            <person name="Dubois E."/>
            <person name="Duesterhoeft A."/>
            <person name="Duncan M."/>
            <person name="Floeth M."/>
            <person name="Fortin N."/>
            <person name="Friesen J.D."/>
            <person name="Fritz C."/>
            <person name="Goffeau A."/>
            <person name="Hall J."/>
            <person name="Hebling U."/>
            <person name="Heumann K."/>
            <person name="Hilbert H."/>
            <person name="Hillier L.W."/>
            <person name="Hunicke-Smith S."/>
            <person name="Hyman R.W."/>
            <person name="Johnston M."/>
            <person name="Kalman S."/>
            <person name="Kleine K."/>
            <person name="Komp C."/>
            <person name="Kurdi O."/>
            <person name="Lashkari D."/>
            <person name="Lew H."/>
            <person name="Lin A."/>
            <person name="Lin D."/>
            <person name="Louis E.J."/>
            <person name="Marathe R."/>
            <person name="Messenguy F."/>
            <person name="Mewes H.-W."/>
            <person name="Mirtipati S."/>
            <person name="Moestl D."/>
            <person name="Mueller-Auer S."/>
            <person name="Namath A."/>
            <person name="Nentwich U."/>
            <person name="Oefner P."/>
            <person name="Pearson D."/>
            <person name="Petel F.X."/>
            <person name="Pohl T.M."/>
            <person name="Purnelle B."/>
            <person name="Rajandream M.A."/>
            <person name="Rechmann S."/>
            <person name="Rieger M."/>
            <person name="Riles L."/>
            <person name="Roberts D."/>
            <person name="Schaefer M."/>
            <person name="Scharfe M."/>
            <person name="Scherens B."/>
            <person name="Schramm S."/>
            <person name="Schroeder M."/>
            <person name="Sdicu A.-M."/>
            <person name="Tettelin H."/>
            <person name="Urrestarazu L.A."/>
            <person name="Ushinsky S."/>
            <person name="Vierendeels F."/>
            <person name="Vissers S."/>
            <person name="Voss H."/>
            <person name="Walsh S.V."/>
            <person name="Wambutt R."/>
            <person name="Wang Y."/>
            <person name="Wedler E."/>
            <person name="Wedler H."/>
            <person name="Winnett E."/>
            <person name="Zhong W.-W."/>
            <person name="Zollner A."/>
            <person name="Vo D.H."/>
            <person name="Hani J."/>
        </authorList>
    </citation>
    <scope>NUCLEOTIDE SEQUENCE [LARGE SCALE GENOMIC DNA]</scope>
    <source>
        <strain>ATCC 204508 / S288c</strain>
    </source>
</reference>
<reference key="3">
    <citation type="journal article" date="2014" name="G3 (Bethesda)">
        <title>The reference genome sequence of Saccharomyces cerevisiae: Then and now.</title>
        <authorList>
            <person name="Engel S.R."/>
            <person name="Dietrich F.S."/>
            <person name="Fisk D.G."/>
            <person name="Binkley G."/>
            <person name="Balakrishnan R."/>
            <person name="Costanzo M.C."/>
            <person name="Dwight S.S."/>
            <person name="Hitz B.C."/>
            <person name="Karra K."/>
            <person name="Nash R.S."/>
            <person name="Weng S."/>
            <person name="Wong E.D."/>
            <person name="Lloyd P."/>
            <person name="Skrzypek M.S."/>
            <person name="Miyasato S.R."/>
            <person name="Simison M."/>
            <person name="Cherry J.M."/>
        </authorList>
    </citation>
    <scope>GENOME REANNOTATION</scope>
    <source>
        <strain>ATCC 204508 / S288c</strain>
    </source>
</reference>
<reference key="4">
    <citation type="journal article" date="2003" name="Nature">
        <title>Global analysis of protein expression in yeast.</title>
        <authorList>
            <person name="Ghaemmaghami S."/>
            <person name="Huh W.-K."/>
            <person name="Bower K."/>
            <person name="Howson R.W."/>
            <person name="Belle A."/>
            <person name="Dephoure N."/>
            <person name="O'Shea E.K."/>
            <person name="Weissman J.S."/>
        </authorList>
    </citation>
    <scope>LEVEL OF PROTEIN EXPRESSION [LARGE SCALE ANALYSIS]</scope>
</reference>
<proteinExistence type="evidence at protein level"/>
<feature type="chain" id="PRO_0000059097" description="Dolichyl-phosphate beta-glucosyltransferase">
    <location>
        <begin position="1"/>
        <end position="334"/>
    </location>
</feature>
<feature type="topological domain" description="Lumenal" evidence="6">
    <location>
        <begin position="1"/>
        <end position="12"/>
    </location>
</feature>
<feature type="transmembrane region" description="Helical" evidence="1">
    <location>
        <begin position="13"/>
        <end position="33"/>
    </location>
</feature>
<feature type="topological domain" description="Cytoplasmic" evidence="6">
    <location>
        <begin position="34"/>
        <end position="334"/>
    </location>
</feature>